<keyword id="KW-0106">Calcium</keyword>
<keyword id="KW-0119">Carbohydrate metabolism</keyword>
<keyword id="KW-0868">Chloride</keyword>
<keyword id="KW-1015">Disulfide bond</keyword>
<keyword id="KW-0326">Glycosidase</keyword>
<keyword id="KW-0378">Hydrolase</keyword>
<keyword id="KW-0479">Metal-binding</keyword>
<keyword id="KW-0873">Pyrrolidone carboxylic acid</keyword>
<keyword id="KW-0964">Secreted</keyword>
<keyword id="KW-0732">Signal</keyword>
<organism>
    <name type="scientific">Drosophila lini</name>
    <name type="common">Fruit fly</name>
    <dbReference type="NCBI Taxonomy" id="74550"/>
    <lineage>
        <taxon>Eukaryota</taxon>
        <taxon>Metazoa</taxon>
        <taxon>Ecdysozoa</taxon>
        <taxon>Arthropoda</taxon>
        <taxon>Hexapoda</taxon>
        <taxon>Insecta</taxon>
        <taxon>Pterygota</taxon>
        <taxon>Neoptera</taxon>
        <taxon>Endopterygota</taxon>
        <taxon>Diptera</taxon>
        <taxon>Brachycera</taxon>
        <taxon>Muscomorpha</taxon>
        <taxon>Ephydroidea</taxon>
        <taxon>Drosophilidae</taxon>
        <taxon>Drosophila</taxon>
        <taxon>Sophophora</taxon>
    </lineage>
</organism>
<sequence length="494" mass="55679">MIKFALALTLCLAGASLSLAQHNPQWWGNRNTIVHLFEWKWSDIAEECETFLAPRGFAGVQVSPVNENIISAGRPWWERYQPISYKLTTRSGNEEEFADMVRRCNDVGIRIYVDVLLNHMSGDFDGVAVGTAGTEAEPSKKSFPGVPYSAQDFHPSCEITDWNDRFQVQQCELVGLKDLNQHSDYVRSKLIEFLDHLIELGVAGFRVDAAKHMAAEDLEYIYGSLSNLNIEHGFPHNARPFIFQEVIDHGHETVSREEYNGLGAVTEFRFSEEIGRAFRGNNALKWLQSWGTDWGFLSSEQALTFVDNHDNQRDMGSVLNYKSPRQYKMATAFHLAYPYGISRVMSSFAFDDHDTPPPQDAQENIISPEFDEDGACVNGWICEHRWRQIYAMVGFKNAVRDTELSAWWDNGDNQISFCRGNKGFLAVNNNQYDLSQELNTCLPAGEYCDVISGSLIDGACTGKSVHVNEHGYGYIHIGSDDFDGVLALHVNAKV</sequence>
<gene>
    <name type="primary">Amyrel</name>
</gene>
<evidence type="ECO:0000250" key="1"/>
<evidence type="ECO:0000250" key="2">
    <source>
        <dbReference type="UniProtKB" id="P04746"/>
    </source>
</evidence>
<evidence type="ECO:0000250" key="3">
    <source>
        <dbReference type="UniProtKB" id="P56634"/>
    </source>
</evidence>
<evidence type="ECO:0000255" key="4"/>
<evidence type="ECO:0000305" key="5"/>
<protein>
    <recommendedName>
        <fullName>Alpha-amylase-related protein</fullName>
        <ecNumber evidence="2">3.2.1.1</ecNumber>
    </recommendedName>
</protein>
<comment type="catalytic activity">
    <reaction evidence="2">
        <text>Endohydrolysis of (1-&gt;4)-alpha-D-glucosidic linkages in polysaccharides containing three or more (1-&gt;4)-alpha-linked D-glucose units.</text>
        <dbReference type="EC" id="3.2.1.1"/>
    </reaction>
</comment>
<comment type="cofactor">
    <cofactor evidence="3">
        <name>Ca(2+)</name>
        <dbReference type="ChEBI" id="CHEBI:29108"/>
    </cofactor>
    <text evidence="3">Binds 1 Ca(2+) ion per subunit.</text>
</comment>
<comment type="cofactor">
    <cofactor evidence="3">
        <name>chloride</name>
        <dbReference type="ChEBI" id="CHEBI:17996"/>
    </cofactor>
    <text evidence="3">Binds 1 Cl(-) ion per subunit.</text>
</comment>
<comment type="subunit">
    <text evidence="1">Monomer.</text>
</comment>
<comment type="subcellular location">
    <subcellularLocation>
        <location evidence="5">Secreted</location>
    </subcellularLocation>
</comment>
<comment type="similarity">
    <text evidence="5">Belongs to the glycosyl hydrolase 13 family.</text>
</comment>
<accession>O76262</accession>
<reference key="1">
    <citation type="submission" date="2002-01" db="EMBL/GenBank/DDBJ databases">
        <authorList>
            <person name="Da Lage J.-L."/>
        </authorList>
    </citation>
    <scope>NUCLEOTIDE SEQUENCE [GENOMIC DNA]</scope>
</reference>
<feature type="signal peptide" evidence="1">
    <location>
        <begin position="1"/>
        <end position="20"/>
    </location>
</feature>
<feature type="chain" id="PRO_0000001380" description="Alpha-amylase-related protein">
    <location>
        <begin position="21"/>
        <end position="494"/>
    </location>
</feature>
<feature type="active site" description="Nucleophile" evidence="2">
    <location>
        <position position="208"/>
    </location>
</feature>
<feature type="active site" description="Proton donor" evidence="2">
    <location>
        <position position="245"/>
    </location>
</feature>
<feature type="binding site" evidence="3">
    <location>
        <position position="118"/>
    </location>
    <ligand>
        <name>Ca(2+)</name>
        <dbReference type="ChEBI" id="CHEBI:29108"/>
    </ligand>
</feature>
<feature type="binding site" evidence="3">
    <location>
        <position position="169"/>
    </location>
    <ligand>
        <name>Ca(2+)</name>
        <dbReference type="ChEBI" id="CHEBI:29108"/>
    </ligand>
</feature>
<feature type="binding site" evidence="3">
    <location>
        <position position="178"/>
    </location>
    <ligand>
        <name>Ca(2+)</name>
        <dbReference type="ChEBI" id="CHEBI:29108"/>
    </ligand>
</feature>
<feature type="binding site" evidence="3">
    <location>
        <position position="206"/>
    </location>
    <ligand>
        <name>chloride</name>
        <dbReference type="ChEBI" id="CHEBI:17996"/>
    </ligand>
</feature>
<feature type="binding site" evidence="3">
    <location>
        <position position="212"/>
    </location>
    <ligand>
        <name>Ca(2+)</name>
        <dbReference type="ChEBI" id="CHEBI:29108"/>
    </ligand>
</feature>
<feature type="binding site" evidence="3">
    <location>
        <position position="308"/>
    </location>
    <ligand>
        <name>chloride</name>
        <dbReference type="ChEBI" id="CHEBI:17996"/>
    </ligand>
</feature>
<feature type="binding site" evidence="3">
    <location>
        <position position="343"/>
    </location>
    <ligand>
        <name>chloride</name>
        <dbReference type="ChEBI" id="CHEBI:17996"/>
    </ligand>
</feature>
<feature type="site" description="Transition state stabilizer" evidence="2">
    <location>
        <position position="310"/>
    </location>
</feature>
<feature type="modified residue" description="Pyrrolidone carboxylic acid" evidence="1">
    <location>
        <position position="21"/>
    </location>
</feature>
<feature type="disulfide bond" evidence="3">
    <location>
        <begin position="48"/>
        <end position="104"/>
    </location>
</feature>
<feature type="disulfide bond" evidence="3">
    <location>
        <begin position="157"/>
        <end position="171"/>
    </location>
</feature>
<feature type="disulfide bond" evidence="3">
    <location>
        <begin position="376"/>
        <end position="382"/>
    </location>
</feature>
<feature type="disulfide bond" evidence="4">
    <location>
        <begin position="418"/>
        <end position="441"/>
    </location>
</feature>
<feature type="disulfide bond" evidence="3">
    <location>
        <begin position="448"/>
        <end position="460"/>
    </location>
</feature>
<name>AMYR_DROLN</name>
<dbReference type="EC" id="3.2.1.1" evidence="2"/>
<dbReference type="EMBL" id="AF039559">
    <property type="protein sequence ID" value="AAC39094.2"/>
    <property type="molecule type" value="Genomic_DNA"/>
</dbReference>
<dbReference type="SMR" id="O76262"/>
<dbReference type="CAZy" id="GH13">
    <property type="family name" value="Glycoside Hydrolase Family 13"/>
</dbReference>
<dbReference type="GO" id="GO:0005576">
    <property type="term" value="C:extracellular region"/>
    <property type="evidence" value="ECO:0007669"/>
    <property type="project" value="UniProtKB-SubCell"/>
</dbReference>
<dbReference type="GO" id="GO:0004556">
    <property type="term" value="F:alpha-amylase activity"/>
    <property type="evidence" value="ECO:0007669"/>
    <property type="project" value="UniProtKB-EC"/>
</dbReference>
<dbReference type="GO" id="GO:0046872">
    <property type="term" value="F:metal ion binding"/>
    <property type="evidence" value="ECO:0007669"/>
    <property type="project" value="UniProtKB-KW"/>
</dbReference>
<dbReference type="GO" id="GO:0005975">
    <property type="term" value="P:carbohydrate metabolic process"/>
    <property type="evidence" value="ECO:0007669"/>
    <property type="project" value="InterPro"/>
</dbReference>
<dbReference type="CDD" id="cd11317">
    <property type="entry name" value="AmyAc_bac_euk_AmyA"/>
    <property type="match status" value="1"/>
</dbReference>
<dbReference type="FunFam" id="3.20.20.80:FF:000119">
    <property type="entry name" value="Alpha-amylase-related protein"/>
    <property type="match status" value="1"/>
</dbReference>
<dbReference type="FunFam" id="2.60.40.1180:FF:000020">
    <property type="entry name" value="Pancreatic alpha-amylase"/>
    <property type="match status" value="1"/>
</dbReference>
<dbReference type="Gene3D" id="3.20.20.80">
    <property type="entry name" value="Glycosidases"/>
    <property type="match status" value="1"/>
</dbReference>
<dbReference type="Gene3D" id="2.60.40.1180">
    <property type="entry name" value="Golgi alpha-mannosidase II"/>
    <property type="match status" value="1"/>
</dbReference>
<dbReference type="InterPro" id="IPR006048">
    <property type="entry name" value="A-amylase/branching_C"/>
</dbReference>
<dbReference type="InterPro" id="IPR031319">
    <property type="entry name" value="A-amylase_C"/>
</dbReference>
<dbReference type="InterPro" id="IPR006046">
    <property type="entry name" value="Alpha_amylase"/>
</dbReference>
<dbReference type="InterPro" id="IPR006047">
    <property type="entry name" value="Glyco_hydro_13_cat_dom"/>
</dbReference>
<dbReference type="InterPro" id="IPR013780">
    <property type="entry name" value="Glyco_hydro_b"/>
</dbReference>
<dbReference type="InterPro" id="IPR017853">
    <property type="entry name" value="Glycoside_hydrolase_SF"/>
</dbReference>
<dbReference type="PANTHER" id="PTHR43447">
    <property type="entry name" value="ALPHA-AMYLASE"/>
    <property type="match status" value="1"/>
</dbReference>
<dbReference type="Pfam" id="PF00128">
    <property type="entry name" value="Alpha-amylase"/>
    <property type="match status" value="1"/>
</dbReference>
<dbReference type="Pfam" id="PF02806">
    <property type="entry name" value="Alpha-amylase_C"/>
    <property type="match status" value="1"/>
</dbReference>
<dbReference type="PRINTS" id="PR00110">
    <property type="entry name" value="ALPHAAMYLASE"/>
</dbReference>
<dbReference type="SMART" id="SM00642">
    <property type="entry name" value="Aamy"/>
    <property type="match status" value="1"/>
</dbReference>
<dbReference type="SMART" id="SM00632">
    <property type="entry name" value="Aamy_C"/>
    <property type="match status" value="1"/>
</dbReference>
<dbReference type="SUPFAM" id="SSF51445">
    <property type="entry name" value="(Trans)glycosidases"/>
    <property type="match status" value="1"/>
</dbReference>
<dbReference type="SUPFAM" id="SSF51011">
    <property type="entry name" value="Glycosyl hydrolase domain"/>
    <property type="match status" value="1"/>
</dbReference>
<proteinExistence type="inferred from homology"/>